<feature type="chain" id="PRO_0000065895" description="Vacuolar protein sorting-associated protein 29">
    <location>
        <begin position="1"/>
        <end position="182"/>
    </location>
</feature>
<feature type="modified residue" description="N6-acetyllysine" evidence="2">
    <location>
        <position position="50"/>
    </location>
</feature>
<feature type="splice variant" id="VSP_004074" description="In isoform 2." evidence="10">
    <original>M</original>
    <variation>MAGHR</variation>
    <location>
        <position position="1"/>
    </location>
</feature>
<feature type="mutagenesis site" description="Decreases interaction with VPS35." evidence="3">
    <original>N</original>
    <variation>D</variation>
    <location>
        <position position="39"/>
    </location>
</feature>
<feature type="mutagenesis site" description="Decreases interaction with VPS35." evidence="3">
    <original>V</original>
    <variation>D</variation>
    <location>
        <position position="90"/>
    </location>
</feature>
<feature type="mutagenesis site" description="Disrupts interaction with VPS35." evidence="3">
    <original>I</original>
    <variation>S</variation>
    <location>
        <position position="91"/>
    </location>
</feature>
<feature type="mutagenesis site" description="Disrupts interaction with ANKRD27." evidence="8">
    <original>L</original>
    <variation>E</variation>
    <location>
        <position position="152"/>
    </location>
</feature>
<feature type="strand" evidence="13">
    <location>
        <begin position="2"/>
        <end position="6"/>
    </location>
</feature>
<feature type="turn" evidence="13">
    <location>
        <begin position="12"/>
        <end position="14"/>
    </location>
</feature>
<feature type="strand" evidence="15">
    <location>
        <begin position="16"/>
        <end position="18"/>
    </location>
</feature>
<feature type="helix" evidence="13">
    <location>
        <begin position="20"/>
        <end position="23"/>
    </location>
</feature>
<feature type="turn" evidence="14">
    <location>
        <begin position="28"/>
        <end position="30"/>
    </location>
</feature>
<feature type="strand" evidence="13">
    <location>
        <begin position="32"/>
        <end position="36"/>
    </location>
</feature>
<feature type="helix" evidence="13">
    <location>
        <begin position="43"/>
        <end position="52"/>
    </location>
</feature>
<feature type="strand" evidence="13">
    <location>
        <begin position="54"/>
        <end position="58"/>
    </location>
</feature>
<feature type="strand" evidence="15">
    <location>
        <begin position="67"/>
        <end position="69"/>
    </location>
</feature>
<feature type="strand" evidence="13">
    <location>
        <begin position="71"/>
        <end position="77"/>
    </location>
</feature>
<feature type="strand" evidence="13">
    <location>
        <begin position="80"/>
        <end position="85"/>
    </location>
</feature>
<feature type="strand" evidence="16">
    <location>
        <begin position="90"/>
        <end position="92"/>
    </location>
</feature>
<feature type="helix" evidence="13">
    <location>
        <begin position="96"/>
        <end position="106"/>
    </location>
</feature>
<feature type="strand" evidence="13">
    <location>
        <begin position="107"/>
        <end position="112"/>
    </location>
</feature>
<feature type="strand" evidence="13">
    <location>
        <begin position="120"/>
        <end position="124"/>
    </location>
</feature>
<feature type="strand" evidence="13">
    <location>
        <begin position="127"/>
        <end position="131"/>
    </location>
</feature>
<feature type="strand" evidence="16">
    <location>
        <begin position="143"/>
        <end position="145"/>
    </location>
</feature>
<feature type="strand" evidence="13">
    <location>
        <begin position="149"/>
        <end position="156"/>
    </location>
</feature>
<feature type="strand" evidence="13">
    <location>
        <begin position="159"/>
        <end position="168"/>
    </location>
</feature>
<feature type="strand" evidence="13">
    <location>
        <begin position="171"/>
        <end position="180"/>
    </location>
</feature>
<proteinExistence type="evidence at protein level"/>
<organism>
    <name type="scientific">Mus musculus</name>
    <name type="common">Mouse</name>
    <dbReference type="NCBI Taxonomy" id="10090"/>
    <lineage>
        <taxon>Eukaryota</taxon>
        <taxon>Metazoa</taxon>
        <taxon>Chordata</taxon>
        <taxon>Craniata</taxon>
        <taxon>Vertebrata</taxon>
        <taxon>Euteleostomi</taxon>
        <taxon>Mammalia</taxon>
        <taxon>Eutheria</taxon>
        <taxon>Euarchontoglires</taxon>
        <taxon>Glires</taxon>
        <taxon>Rodentia</taxon>
        <taxon>Myomorpha</taxon>
        <taxon>Muroidea</taxon>
        <taxon>Muridae</taxon>
        <taxon>Murinae</taxon>
        <taxon>Mus</taxon>
        <taxon>Mus</taxon>
    </lineage>
</organism>
<evidence type="ECO:0000250" key="1"/>
<evidence type="ECO:0000250" key="2">
    <source>
        <dbReference type="UniProtKB" id="Q9UBQ0"/>
    </source>
</evidence>
<evidence type="ECO:0000269" key="3">
    <source>
    </source>
</evidence>
<evidence type="ECO:0000269" key="4">
    <source>
    </source>
</evidence>
<evidence type="ECO:0000269" key="5">
    <source>
    </source>
</evidence>
<evidence type="ECO:0000269" key="6">
    <source>
    </source>
</evidence>
<evidence type="ECO:0000269" key="7">
    <source>
    </source>
</evidence>
<evidence type="ECO:0000269" key="8">
    <source>
    </source>
</evidence>
<evidence type="ECO:0000303" key="9">
    <source>
    </source>
</evidence>
<evidence type="ECO:0000303" key="10">
    <source>
    </source>
</evidence>
<evidence type="ECO:0000303" key="11">
    <source>
    </source>
</evidence>
<evidence type="ECO:0000305" key="12"/>
<evidence type="ECO:0007829" key="13">
    <source>
        <dbReference type="PDB" id="1Z2W"/>
    </source>
</evidence>
<evidence type="ECO:0007829" key="14">
    <source>
        <dbReference type="PDB" id="1Z2X"/>
    </source>
</evidence>
<evidence type="ECO:0007829" key="15">
    <source>
        <dbReference type="PDB" id="3PSN"/>
    </source>
</evidence>
<evidence type="ECO:0007829" key="16">
    <source>
        <dbReference type="PDB" id="6TL0"/>
    </source>
</evidence>
<sequence length="182" mass="20496">MLVLVLGDLHIPHRCNSLPAKFKKLLVPGKIQHILCTGNLCTKESYDYLKTLAGDVHIVRGDFDENLNYPEQKVVTVGQFKIGLIHGHQVIPWGDMASLALLQRQFDVDILISGHTHKFEAFEHENKFYINPGSATGAYNALETNIIPSFVLMDIQASTVVTYVYQLIGDDVKVERIEYKKS</sequence>
<protein>
    <recommendedName>
        <fullName>Vacuolar protein sorting-associated protein 29</fullName>
    </recommendedName>
    <alternativeName>
        <fullName>Vesicle protein sorting 29</fullName>
    </alternativeName>
</protein>
<name>VPS29_MOUSE</name>
<reference key="1">
    <citation type="submission" date="1999-10" db="EMBL/GenBank/DDBJ databases">
        <title>Molecular cloning of mouse vacuolar sorting protein VPS29.</title>
        <authorList>
            <person name="Edgar A.J."/>
        </authorList>
    </citation>
    <scope>NUCLEOTIDE SEQUENCE [MRNA] (ISOFORM 1)</scope>
    <source>
        <tissue>Lung</tissue>
    </source>
</reference>
<reference key="2">
    <citation type="journal article" date="2005" name="Science">
        <title>The transcriptional landscape of the mammalian genome.</title>
        <authorList>
            <person name="Carninci P."/>
            <person name="Kasukawa T."/>
            <person name="Katayama S."/>
            <person name="Gough J."/>
            <person name="Frith M.C."/>
            <person name="Maeda N."/>
            <person name="Oyama R."/>
            <person name="Ravasi T."/>
            <person name="Lenhard B."/>
            <person name="Wells C."/>
            <person name="Kodzius R."/>
            <person name="Shimokawa K."/>
            <person name="Bajic V.B."/>
            <person name="Brenner S.E."/>
            <person name="Batalov S."/>
            <person name="Forrest A.R."/>
            <person name="Zavolan M."/>
            <person name="Davis M.J."/>
            <person name="Wilming L.G."/>
            <person name="Aidinis V."/>
            <person name="Allen J.E."/>
            <person name="Ambesi-Impiombato A."/>
            <person name="Apweiler R."/>
            <person name="Aturaliya R.N."/>
            <person name="Bailey T.L."/>
            <person name="Bansal M."/>
            <person name="Baxter L."/>
            <person name="Beisel K.W."/>
            <person name="Bersano T."/>
            <person name="Bono H."/>
            <person name="Chalk A.M."/>
            <person name="Chiu K.P."/>
            <person name="Choudhary V."/>
            <person name="Christoffels A."/>
            <person name="Clutterbuck D.R."/>
            <person name="Crowe M.L."/>
            <person name="Dalla E."/>
            <person name="Dalrymple B.P."/>
            <person name="de Bono B."/>
            <person name="Della Gatta G."/>
            <person name="di Bernardo D."/>
            <person name="Down T."/>
            <person name="Engstrom P."/>
            <person name="Fagiolini M."/>
            <person name="Faulkner G."/>
            <person name="Fletcher C.F."/>
            <person name="Fukushima T."/>
            <person name="Furuno M."/>
            <person name="Futaki S."/>
            <person name="Gariboldi M."/>
            <person name="Georgii-Hemming P."/>
            <person name="Gingeras T.R."/>
            <person name="Gojobori T."/>
            <person name="Green R.E."/>
            <person name="Gustincich S."/>
            <person name="Harbers M."/>
            <person name="Hayashi Y."/>
            <person name="Hensch T.K."/>
            <person name="Hirokawa N."/>
            <person name="Hill D."/>
            <person name="Huminiecki L."/>
            <person name="Iacono M."/>
            <person name="Ikeo K."/>
            <person name="Iwama A."/>
            <person name="Ishikawa T."/>
            <person name="Jakt M."/>
            <person name="Kanapin A."/>
            <person name="Katoh M."/>
            <person name="Kawasawa Y."/>
            <person name="Kelso J."/>
            <person name="Kitamura H."/>
            <person name="Kitano H."/>
            <person name="Kollias G."/>
            <person name="Krishnan S.P."/>
            <person name="Kruger A."/>
            <person name="Kummerfeld S.K."/>
            <person name="Kurochkin I.V."/>
            <person name="Lareau L.F."/>
            <person name="Lazarevic D."/>
            <person name="Lipovich L."/>
            <person name="Liu J."/>
            <person name="Liuni S."/>
            <person name="McWilliam S."/>
            <person name="Madan Babu M."/>
            <person name="Madera M."/>
            <person name="Marchionni L."/>
            <person name="Matsuda H."/>
            <person name="Matsuzawa S."/>
            <person name="Miki H."/>
            <person name="Mignone F."/>
            <person name="Miyake S."/>
            <person name="Morris K."/>
            <person name="Mottagui-Tabar S."/>
            <person name="Mulder N."/>
            <person name="Nakano N."/>
            <person name="Nakauchi H."/>
            <person name="Ng P."/>
            <person name="Nilsson R."/>
            <person name="Nishiguchi S."/>
            <person name="Nishikawa S."/>
            <person name="Nori F."/>
            <person name="Ohara O."/>
            <person name="Okazaki Y."/>
            <person name="Orlando V."/>
            <person name="Pang K.C."/>
            <person name="Pavan W.J."/>
            <person name="Pavesi G."/>
            <person name="Pesole G."/>
            <person name="Petrovsky N."/>
            <person name="Piazza S."/>
            <person name="Reed J."/>
            <person name="Reid J.F."/>
            <person name="Ring B.Z."/>
            <person name="Ringwald M."/>
            <person name="Rost B."/>
            <person name="Ruan Y."/>
            <person name="Salzberg S.L."/>
            <person name="Sandelin A."/>
            <person name="Schneider C."/>
            <person name="Schoenbach C."/>
            <person name="Sekiguchi K."/>
            <person name="Semple C.A."/>
            <person name="Seno S."/>
            <person name="Sessa L."/>
            <person name="Sheng Y."/>
            <person name="Shibata Y."/>
            <person name="Shimada H."/>
            <person name="Shimada K."/>
            <person name="Silva D."/>
            <person name="Sinclair B."/>
            <person name="Sperling S."/>
            <person name="Stupka E."/>
            <person name="Sugiura K."/>
            <person name="Sultana R."/>
            <person name="Takenaka Y."/>
            <person name="Taki K."/>
            <person name="Tammoja K."/>
            <person name="Tan S.L."/>
            <person name="Tang S."/>
            <person name="Taylor M.S."/>
            <person name="Tegner J."/>
            <person name="Teichmann S.A."/>
            <person name="Ueda H.R."/>
            <person name="van Nimwegen E."/>
            <person name="Verardo R."/>
            <person name="Wei C.L."/>
            <person name="Yagi K."/>
            <person name="Yamanishi H."/>
            <person name="Zabarovsky E."/>
            <person name="Zhu S."/>
            <person name="Zimmer A."/>
            <person name="Hide W."/>
            <person name="Bult C."/>
            <person name="Grimmond S.M."/>
            <person name="Teasdale R.D."/>
            <person name="Liu E.T."/>
            <person name="Brusic V."/>
            <person name="Quackenbush J."/>
            <person name="Wahlestedt C."/>
            <person name="Mattick J.S."/>
            <person name="Hume D.A."/>
            <person name="Kai C."/>
            <person name="Sasaki D."/>
            <person name="Tomaru Y."/>
            <person name="Fukuda S."/>
            <person name="Kanamori-Katayama M."/>
            <person name="Suzuki M."/>
            <person name="Aoki J."/>
            <person name="Arakawa T."/>
            <person name="Iida J."/>
            <person name="Imamura K."/>
            <person name="Itoh M."/>
            <person name="Kato T."/>
            <person name="Kawaji H."/>
            <person name="Kawagashira N."/>
            <person name="Kawashima T."/>
            <person name="Kojima M."/>
            <person name="Kondo S."/>
            <person name="Konno H."/>
            <person name="Nakano K."/>
            <person name="Ninomiya N."/>
            <person name="Nishio T."/>
            <person name="Okada M."/>
            <person name="Plessy C."/>
            <person name="Shibata K."/>
            <person name="Shiraki T."/>
            <person name="Suzuki S."/>
            <person name="Tagami M."/>
            <person name="Waki K."/>
            <person name="Watahiki A."/>
            <person name="Okamura-Oho Y."/>
            <person name="Suzuki H."/>
            <person name="Kawai J."/>
            <person name="Hayashizaki Y."/>
        </authorList>
    </citation>
    <scope>NUCLEOTIDE SEQUENCE [LARGE SCALE MRNA] (ISOFORMS 1 AND 2)</scope>
    <source>
        <strain>C57BL/6J</strain>
        <tissue>Bone marrow</tissue>
        <tissue>Embryo</tissue>
    </source>
</reference>
<reference key="3">
    <citation type="journal article" date="2004" name="Genome Res.">
        <title>The status, quality, and expansion of the NIH full-length cDNA project: the Mammalian Gene Collection (MGC).</title>
        <authorList>
            <consortium name="The MGC Project Team"/>
        </authorList>
    </citation>
    <scope>NUCLEOTIDE SEQUENCE [LARGE SCALE MRNA] (ISOFORM 1)</scope>
    <source>
        <tissue>Mammary tumor</tissue>
    </source>
</reference>
<reference key="4">
    <citation type="submission" date="2007-03" db="UniProtKB">
        <authorList>
            <person name="Lubec G."/>
            <person name="Klug S."/>
        </authorList>
    </citation>
    <scope>PROTEIN SEQUENCE OF 1-14</scope>
    <scope>IDENTIFICATION BY MASS SPECTROMETRY</scope>
    <source>
        <tissue>Hippocampus</tissue>
    </source>
</reference>
<reference key="5">
    <citation type="journal article" date="2010" name="Biochem. Biophys. Res. Commun.">
        <title>Implication of mouse Vps26b-Vps29-Vps35 retromer complex in sortilin trafficking.</title>
        <authorList>
            <person name="Kim E."/>
            <person name="Lee Y."/>
            <person name="Lee H.J."/>
            <person name="Kim J.S."/>
            <person name="Song B.S."/>
            <person name="Huh J.W."/>
            <person name="Lee S.R."/>
            <person name="Kim S.U."/>
            <person name="Kim S.H."/>
            <person name="Hong Y."/>
            <person name="Shim I."/>
            <person name="Chang K.T."/>
        </authorList>
    </citation>
    <scope>SUBUNIT</scope>
</reference>
<reference key="6">
    <citation type="journal article" date="2010" name="Cell">
        <title>A tissue-specific atlas of mouse protein phosphorylation and expression.</title>
        <authorList>
            <person name="Huttlin E.L."/>
            <person name="Jedrychowski M.P."/>
            <person name="Elias J.E."/>
            <person name="Goswami T."/>
            <person name="Rad R."/>
            <person name="Beausoleil S.A."/>
            <person name="Villen J."/>
            <person name="Haas W."/>
            <person name="Sowa M.E."/>
            <person name="Gygi S.P."/>
        </authorList>
    </citation>
    <scope>IDENTIFICATION BY MASS SPECTROMETRY [LARGE SCALE ANALYSIS]</scope>
    <source>
        <tissue>Brain</tissue>
        <tissue>Brown adipose tissue</tissue>
        <tissue>Heart</tissue>
        <tissue>Kidney</tissue>
        <tissue>Liver</tissue>
        <tissue>Lung</tissue>
        <tissue>Pancreas</tissue>
        <tissue>Spleen</tissue>
        <tissue>Testis</tissue>
    </source>
</reference>
<reference key="7">
    <citation type="journal article" date="2011" name="PLoS ONE">
        <title>VPS29 is not an active metallo-phosphatase but is a rigid scaffold required for retromer interaction with accessory proteins.</title>
        <authorList>
            <person name="Swarbrick J.D."/>
            <person name="Shaw D.J."/>
            <person name="Chhabra S."/>
            <person name="Ghai R."/>
            <person name="Valkov E."/>
            <person name="Norwood S.J."/>
            <person name="Seaman M.N."/>
            <person name="Collins B.M."/>
        </authorList>
    </citation>
    <scope>FUNCTION</scope>
    <scope>LACK OF PHOSPHATASE ACTIVITY</scope>
    <scope>INTERACTION WITH SNX1</scope>
</reference>
<reference key="8">
    <citation type="journal article" date="2011" name="Traffic">
        <title>Assembly and solution structure of the core retromer protein complex.</title>
        <authorList>
            <person name="Norwood S.J."/>
            <person name="Shaw D.J."/>
            <person name="Cowieson N.P."/>
            <person name="Owen D.J."/>
            <person name="Teasdale R.D."/>
            <person name="Collins B.M."/>
        </authorList>
    </citation>
    <scope>SUBUNIT</scope>
</reference>
<reference key="9">
    <citation type="journal article" date="2011" name="Traffic">
        <title>Vps26A and Vps26B subunits define distinct retromer complexes.</title>
        <authorList>
            <person name="Bugarcic A."/>
            <person name="Zhe Y."/>
            <person name="Kerr M.C."/>
            <person name="Griffin J."/>
            <person name="Collins B.M."/>
            <person name="Teasdale R.D."/>
        </authorList>
    </citation>
    <scope>SUBUNIT</scope>
</reference>
<reference key="10">
    <citation type="journal article" date="2014" name="Dev. Cell">
        <title>VARP is recruited on to endosomes by direct interaction with retromer, where together they function in export to the cell surface.</title>
        <authorList>
            <person name="Hesketh G.G."/>
            <person name="Perez-Dorado I."/>
            <person name="Jackson L.P."/>
            <person name="Wartosch L."/>
            <person name="Schafer I.B."/>
            <person name="Gray S.R."/>
            <person name="McCoy A.J."/>
            <person name="Zeldin O.B."/>
            <person name="Garman E.F."/>
            <person name="Harbour M.E."/>
            <person name="Evans P.R."/>
            <person name="Seaman M.N."/>
            <person name="Luzio J.P."/>
            <person name="Owen D.J."/>
        </authorList>
    </citation>
    <scope>INTERACTION WITH ANKRD27</scope>
    <scope>MUTAGENESIS OF LEU-152</scope>
</reference>
<reference key="11">
    <citation type="journal article" date="2005" name="Nat. Struct. Mol. Biol.">
        <title>Vps29 has a phosphoesterase fold that acts as a protein interaction scaffold for retromer assembly.</title>
        <authorList>
            <person name="Collins B.M."/>
            <person name="Skinner C.F."/>
            <person name="Watson P.J."/>
            <person name="Seaman M.N."/>
            <person name="Owen D.J."/>
        </authorList>
    </citation>
    <scope>X-RAY CRYSTALLOGRAPHY (2.0 ANGSTROMS) IN COMPLEX WITH MANGANESE IONS</scope>
    <scope>ABSENCE OF CATALYTIC ACTIVITY</scope>
    <scope>SUBCELLULAR LOCATION</scope>
    <scope>SUBUNIT</scope>
    <scope>MUTAGENESIS OF ASN-39; VAL-90 AND ILE-91</scope>
</reference>
<dbReference type="EMBL" id="AF193794">
    <property type="protein sequence ID" value="AAF04595.1"/>
    <property type="molecule type" value="mRNA"/>
</dbReference>
<dbReference type="EMBL" id="AK004103">
    <property type="protein sequence ID" value="BAB23170.1"/>
    <property type="molecule type" value="mRNA"/>
</dbReference>
<dbReference type="EMBL" id="AK150330">
    <property type="protein sequence ID" value="BAE29472.1"/>
    <property type="molecule type" value="mRNA"/>
</dbReference>
<dbReference type="EMBL" id="BC005663">
    <property type="protein sequence ID" value="AAH05663.1"/>
    <property type="molecule type" value="mRNA"/>
</dbReference>
<dbReference type="CCDS" id="CCDS39256.1">
    <molecule id="Q9QZ88-1"/>
</dbReference>
<dbReference type="CCDS" id="CCDS84954.1">
    <molecule id="Q9QZ88-2"/>
</dbReference>
<dbReference type="RefSeq" id="NP_001334382.1">
    <molecule id="Q9QZ88-2"/>
    <property type="nucleotide sequence ID" value="NM_001347453.2"/>
</dbReference>
<dbReference type="RefSeq" id="NP_062754.1">
    <molecule id="Q9QZ88-1"/>
    <property type="nucleotide sequence ID" value="NM_019780.2"/>
</dbReference>
<dbReference type="PDB" id="1Z2W">
    <property type="method" value="X-ray"/>
    <property type="resolution" value="2.00 A"/>
    <property type="chains" value="A/B=1-182"/>
</dbReference>
<dbReference type="PDB" id="1Z2X">
    <property type="method" value="X-ray"/>
    <property type="resolution" value="2.22 A"/>
    <property type="chains" value="A/B=1-182"/>
</dbReference>
<dbReference type="PDB" id="3PSN">
    <property type="method" value="X-ray"/>
    <property type="resolution" value="2.20 A"/>
    <property type="chains" value="A/B=1-182"/>
</dbReference>
<dbReference type="PDB" id="3PSO">
    <property type="method" value="X-ray"/>
    <property type="resolution" value="3.00 A"/>
    <property type="chains" value="A/B=1-182"/>
</dbReference>
<dbReference type="PDB" id="6TL0">
    <property type="method" value="NMR"/>
    <property type="chains" value="A=1-182"/>
</dbReference>
<dbReference type="PDB" id="6VAB">
    <property type="method" value="EM"/>
    <property type="resolution" value="4.90 A"/>
    <property type="chains" value="A/C=1-182"/>
</dbReference>
<dbReference type="PDB" id="6VAC">
    <property type="method" value="EM"/>
    <property type="resolution" value="5.70 A"/>
    <property type="chains" value="C=1-182"/>
</dbReference>
<dbReference type="PDB" id="7U6F">
    <property type="method" value="EM"/>
    <property type="resolution" value="4.90 A"/>
    <property type="chains" value="B4=1-182"/>
</dbReference>
<dbReference type="PDB" id="8FUD">
    <property type="method" value="X-ray"/>
    <property type="resolution" value="1.68 A"/>
    <property type="chains" value="A/B=2-182"/>
</dbReference>
<dbReference type="PDB" id="8TTA">
    <property type="method" value="X-ray"/>
    <property type="resolution" value="3.46 A"/>
    <property type="chains" value="A/C=1-182"/>
</dbReference>
<dbReference type="PDB" id="8TTC">
    <property type="method" value="X-ray"/>
    <property type="resolution" value="3.01 A"/>
    <property type="chains" value="A/C=1-182"/>
</dbReference>
<dbReference type="PDB" id="8TTD">
    <property type="method" value="X-ray"/>
    <property type="resolution" value="2.01 A"/>
    <property type="chains" value="A=2-182"/>
</dbReference>
<dbReference type="PDB" id="8VOD">
    <property type="method" value="X-ray"/>
    <property type="resolution" value="2.12 A"/>
    <property type="chains" value="A=2-182"/>
</dbReference>
<dbReference type="PDBsum" id="1Z2W"/>
<dbReference type="PDBsum" id="1Z2X"/>
<dbReference type="PDBsum" id="3PSN"/>
<dbReference type="PDBsum" id="3PSO"/>
<dbReference type="PDBsum" id="6TL0"/>
<dbReference type="PDBsum" id="6VAB"/>
<dbReference type="PDBsum" id="6VAC"/>
<dbReference type="PDBsum" id="7U6F"/>
<dbReference type="PDBsum" id="8FUD"/>
<dbReference type="PDBsum" id="8TTA"/>
<dbReference type="PDBsum" id="8TTC"/>
<dbReference type="PDBsum" id="8TTD"/>
<dbReference type="PDBsum" id="8VOD"/>
<dbReference type="EMDB" id="EMD-21135"/>
<dbReference type="EMDB" id="EMD-21136"/>
<dbReference type="EMDB" id="EMD-24963"/>
<dbReference type="EMDB" id="EMD-24964"/>
<dbReference type="EMDB" id="EMD-26340"/>
<dbReference type="EMDB" id="EMD-26341"/>
<dbReference type="EMDB" id="EMD-26342"/>
<dbReference type="EMDB" id="EMD-26343"/>
<dbReference type="EMDB" id="EMD-26345"/>
<dbReference type="SMR" id="Q9QZ88"/>
<dbReference type="BioGRID" id="207976">
    <property type="interactions" value="26"/>
</dbReference>
<dbReference type="CORUM" id="Q9QZ88"/>
<dbReference type="DIP" id="DIP-60495N"/>
<dbReference type="FunCoup" id="Q9QZ88">
    <property type="interactions" value="4548"/>
</dbReference>
<dbReference type="IntAct" id="Q9QZ88">
    <property type="interactions" value="20"/>
</dbReference>
<dbReference type="MINT" id="Q9QZ88"/>
<dbReference type="STRING" id="10090.ENSMUSP00000113525"/>
<dbReference type="iPTMnet" id="Q9QZ88"/>
<dbReference type="PhosphoSitePlus" id="Q9QZ88"/>
<dbReference type="SwissPalm" id="Q9QZ88"/>
<dbReference type="REPRODUCTION-2DPAGE" id="Q9QZ88"/>
<dbReference type="jPOST" id="Q9QZ88"/>
<dbReference type="PaxDb" id="10090-ENSMUSP00000121020"/>
<dbReference type="PeptideAtlas" id="Q9QZ88"/>
<dbReference type="ProteomicsDB" id="297583">
    <molecule id="Q9QZ88-1"/>
</dbReference>
<dbReference type="ProteomicsDB" id="297584">
    <molecule id="Q9QZ88-2"/>
</dbReference>
<dbReference type="Pumba" id="Q9QZ88"/>
<dbReference type="TopDownProteomics" id="Q9QZ88-1">
    <molecule id="Q9QZ88-1"/>
</dbReference>
<dbReference type="Antibodypedia" id="31016">
    <property type="antibodies" value="210 antibodies from 31 providers"/>
</dbReference>
<dbReference type="DNASU" id="56433"/>
<dbReference type="Ensembl" id="ENSMUST00000118830.8">
    <molecule id="Q9QZ88-2"/>
    <property type="protein sequence ID" value="ENSMUSP00000113525.2"/>
    <property type="gene ID" value="ENSMUSG00000029462.19"/>
</dbReference>
<dbReference type="Ensembl" id="ENSMUST00000155671.8">
    <molecule id="Q9QZ88-1"/>
    <property type="protein sequence ID" value="ENSMUSP00000121020.2"/>
    <property type="gene ID" value="ENSMUSG00000029462.19"/>
</dbReference>
<dbReference type="GeneID" id="56433"/>
<dbReference type="KEGG" id="mmu:56433"/>
<dbReference type="UCSC" id="uc008zlb.1">
    <molecule id="Q9QZ88-1"/>
    <property type="organism name" value="mouse"/>
</dbReference>
<dbReference type="UCSC" id="uc008zlc.1">
    <molecule id="Q9QZ88-2"/>
    <property type="organism name" value="mouse"/>
</dbReference>
<dbReference type="AGR" id="MGI:1928344"/>
<dbReference type="CTD" id="51699"/>
<dbReference type="MGI" id="MGI:1928344">
    <property type="gene designation" value="Vps29"/>
</dbReference>
<dbReference type="VEuPathDB" id="HostDB:ENSMUSG00000029462"/>
<dbReference type="eggNOG" id="KOG3325">
    <property type="taxonomic scope" value="Eukaryota"/>
</dbReference>
<dbReference type="GeneTree" id="ENSGT00390000012669"/>
<dbReference type="HOGENOM" id="CLU_063749_0_1_1"/>
<dbReference type="InParanoid" id="Q9QZ88"/>
<dbReference type="OMA" id="VRGNMDY"/>
<dbReference type="PhylomeDB" id="Q9QZ88"/>
<dbReference type="TreeFam" id="TF300880"/>
<dbReference type="Reactome" id="R-MMU-3238698">
    <property type="pathway name" value="WNT ligand biogenesis and trafficking"/>
</dbReference>
<dbReference type="BioGRID-ORCS" id="56433">
    <property type="hits" value="40 hits in 80 CRISPR screens"/>
</dbReference>
<dbReference type="CD-CODE" id="CE726F99">
    <property type="entry name" value="Postsynaptic density"/>
</dbReference>
<dbReference type="ChiTaRS" id="Vps29">
    <property type="organism name" value="mouse"/>
</dbReference>
<dbReference type="EvolutionaryTrace" id="Q9QZ88"/>
<dbReference type="PRO" id="PR:Q9QZ88"/>
<dbReference type="Proteomes" id="UP000000589">
    <property type="component" value="Chromosome 5"/>
</dbReference>
<dbReference type="RNAct" id="Q9QZ88">
    <property type="molecule type" value="protein"/>
</dbReference>
<dbReference type="Bgee" id="ENSMUSG00000029462">
    <property type="expression patterns" value="Expressed in otic placode and 269 other cell types or tissues"/>
</dbReference>
<dbReference type="ExpressionAtlas" id="Q9QZ88">
    <property type="expression patterns" value="baseline and differential"/>
</dbReference>
<dbReference type="GO" id="GO:0005829">
    <property type="term" value="C:cytosol"/>
    <property type="evidence" value="ECO:0007669"/>
    <property type="project" value="Ensembl"/>
</dbReference>
<dbReference type="GO" id="GO:0010008">
    <property type="term" value="C:endosome membrane"/>
    <property type="evidence" value="ECO:0007669"/>
    <property type="project" value="UniProtKB-SubCell"/>
</dbReference>
<dbReference type="GO" id="GO:0030904">
    <property type="term" value="C:retromer complex"/>
    <property type="evidence" value="ECO:0000314"/>
    <property type="project" value="UniProtKB"/>
</dbReference>
<dbReference type="GO" id="GO:0030906">
    <property type="term" value="C:retromer, cargo-selective complex"/>
    <property type="evidence" value="ECO:0007669"/>
    <property type="project" value="Ensembl"/>
</dbReference>
<dbReference type="GO" id="GO:0046872">
    <property type="term" value="F:metal ion binding"/>
    <property type="evidence" value="ECO:0007669"/>
    <property type="project" value="UniProtKB-KW"/>
</dbReference>
<dbReference type="GO" id="GO:0032456">
    <property type="term" value="P:endocytic recycling"/>
    <property type="evidence" value="ECO:0000250"/>
    <property type="project" value="UniProtKB"/>
</dbReference>
<dbReference type="GO" id="GO:0006896">
    <property type="term" value="P:Golgi to vacuole transport"/>
    <property type="evidence" value="ECO:0000250"/>
    <property type="project" value="MGI"/>
</dbReference>
<dbReference type="GO" id="GO:0015031">
    <property type="term" value="P:protein transport"/>
    <property type="evidence" value="ECO:0007669"/>
    <property type="project" value="UniProtKB-KW"/>
</dbReference>
<dbReference type="GO" id="GO:0042147">
    <property type="term" value="P:retrograde transport, endosome to Golgi"/>
    <property type="evidence" value="ECO:0007669"/>
    <property type="project" value="InterPro"/>
</dbReference>
<dbReference type="CDD" id="cd07394">
    <property type="entry name" value="MPP_Vps29"/>
    <property type="match status" value="1"/>
</dbReference>
<dbReference type="FunFam" id="3.60.21.10:FF:000009">
    <property type="entry name" value="Vacuolar protein sorting-associated protein 29"/>
    <property type="match status" value="1"/>
</dbReference>
<dbReference type="Gene3D" id="3.60.21.10">
    <property type="match status" value="1"/>
</dbReference>
<dbReference type="InterPro" id="IPR024654">
    <property type="entry name" value="Calcineurin-like_PHP_lpxH"/>
</dbReference>
<dbReference type="InterPro" id="IPR029052">
    <property type="entry name" value="Metallo-depent_PP-like"/>
</dbReference>
<dbReference type="InterPro" id="IPR000979">
    <property type="entry name" value="Phosphodiesterase_MJ0936/Vps29"/>
</dbReference>
<dbReference type="InterPro" id="IPR028661">
    <property type="entry name" value="Vps29"/>
</dbReference>
<dbReference type="NCBIfam" id="TIGR00040">
    <property type="entry name" value="yfcE"/>
    <property type="match status" value="1"/>
</dbReference>
<dbReference type="PANTHER" id="PTHR11124">
    <property type="entry name" value="VACUOLAR SORTING PROTEIN VPS29"/>
    <property type="match status" value="1"/>
</dbReference>
<dbReference type="Pfam" id="PF12850">
    <property type="entry name" value="Metallophos_2"/>
    <property type="match status" value="1"/>
</dbReference>
<dbReference type="SUPFAM" id="SSF56300">
    <property type="entry name" value="Metallo-dependent phosphatases"/>
    <property type="match status" value="1"/>
</dbReference>
<comment type="function">
    <text evidence="2 3 6">Component of the commander complex that is essential for endosomal recycling of transmembrane cargos; the commander complex is composed of the CCC subcomplex and the retriever subcomplex (By similarity). Component of the retriever complex, which is a heterotrimeric complex related to retromer cargo-selective complex (CSC) and essential for retromer-independent retrieval and recycling of numerous cargos such as integrin alpha-5/beta-1 (ITGA5:ITGB1) (By similarity). Component of the retromer cargo-selective complex (CSC). The CSC is believed to be the core functional component of retromer or respective retromer complex variants acting to prevent missorting of selected transmembrane cargo proteins into the lysosomal degradation pathway. The recruitment of the CSC to the endosomal membrane involves RAB7A and SNX3. The SNX-BAR retromer mediates retrograde transport of cargo proteins from endosomes to the trans-Golgi network (TGN) and is involved in endosome-to-plasma membrane transport for cargo protein recycling. The SNX3-retromer mediates the retrograde endosome-to-TGN transport of WLS distinct from the SNX-BAR retromer pathway. The SNX27-retromer is believed to be involved in endosome-to-plasma membrane trafficking and recycling of a broad spectrum of cargo proteins. The CSC seems to act as recruitment hub for other proteins, such as the WASH complex and TBC1D5. Required to regulate transcytosis of the polymeric immunoglobulin receptor (pIgR-pIgA). In the endosomes, retriever complex drives the retrieval and recycling of NxxY-motif-containing cargo proteins by coupling to SNX17, a cargo essential for the homeostatic maintenance of numerous cell surface proteins associated with processes that include cell migration, cell adhesion, nutrient supply and cell signaling (By similarity). The recruitment of the retriever complex to the endosomal membrane involves CCC and WASH complexes (By similarity). Involved in GLUT1 endosome-to-plasma membrane trafficking; the function is dependent of association with ANKRD27 (By similarity).</text>
</comment>
<comment type="subunit">
    <text evidence="2 3 4 5 7 8">Component of the commander complex consisting of the CCC subcomplex and the retriever subcomplex (By similarity). Component of the heterotrimeric retriever complex formed by VPS26C, VPS29 and VPS35L; within the complex interacts with VPS35L (By similarity). Component of the heterotrimeric retromer cargo-selective complex (CSC), also described as vacuolar protein sorting subcomplex (VPS) formed by VPS26 (VPS26A or VPS26B), VPS29 and VPS35 (PubMed:20875039, PubMed:21040701, PubMed:21920005). The CSC has a highly elongated structure with VPS26 and VPS29 binding independently at opposite distal ends of VPS35 as central platform (By similarity). The CSC is believed to associate with variable sorting nexins to form functionally distinct retromer complex variants. The originally described retromer complex (also called SNX-BAR retromer) is a pentamer containing the CSC and a heterodimeric membrane-deforming subcomplex formed between SNX1 or SNX2 and SNX5 or SNX6 (also called SNX-BAR subcomplex); the respective CSC and SNX-BAR subcomplexes associate with low affinity. The CSC associates with SNX3 to form a SNX3-retromer complex. The CSC associates with SNX27, the WASH complex and the SNX-BAR subcomplex to form the SNX27-retromer complex (By similarity). Interacts with VPS26A, VPS35, SNX1, SNX2, SNX3, SNX27, WASHC5 (PubMed:20875039, PubMed:21920005, PubMed:24856514). Interacts with TBC1D5; this interaction is blocked by VPS35L in the retriever complex (By similarity). Interacts with SNX17; the interaction is indirect; SNX17 (via its C-terminus) interacts with the retriever complex (via VPS26C and VPS35L) (By similarity). Interacts with VPS26B and ANKRD27 (PubMed:20875039, PubMed:21920005, PubMed:24856514).</text>
</comment>
<comment type="interaction">
    <interactant intactId="EBI-8334188">
        <id>Q9QZ88</id>
    </interactant>
    <interactant intactId="EBI-775825">
        <id>Q9EQH3</id>
        <label>Vps35</label>
    </interactant>
    <organismsDiffer>false</organismsDiffer>
    <experiments>5</experiments>
</comment>
<comment type="interaction">
    <interactant intactId="EBI-8334188">
        <id>Q9QZ88</id>
    </interactant>
    <interactant intactId="EBI-5235934">
        <id>Q5T1M5</id>
        <label>FKBP15</label>
    </interactant>
    <organismsDiffer>true</organismsDiffer>
    <experiments>7</experiments>
</comment>
<comment type="interaction">
    <interactant intactId="EBI-8334188">
        <id>Q9QZ88</id>
    </interactant>
    <interactant intactId="EBI-742381">
        <id>Q92609</id>
        <label>TBC1D5</label>
    </interactant>
    <organismsDiffer>true</organismsDiffer>
    <experiments>5</experiments>
</comment>
<comment type="interaction">
    <interactant intactId="EBI-8334188">
        <id>Q9QZ88</id>
    </interactant>
    <interactant intactId="EBI-1054634">
        <id>Q96QK1</id>
        <label>VPS35</label>
    </interactant>
    <organismsDiffer>true</organismsDiffer>
    <experiments>7</experiments>
</comment>
<comment type="interaction">
    <interactant intactId="EBI-15553808">
        <id>Q9QZ88-1</id>
    </interactant>
    <interactant intactId="EBI-775825">
        <id>Q9EQH3</id>
        <label>Vps35</label>
    </interactant>
    <organismsDiffer>false</organismsDiffer>
    <experiments>3</experiments>
</comment>
<comment type="subcellular location">
    <subcellularLocation>
        <location evidence="1">Cytoplasm</location>
    </subcellularLocation>
    <subcellularLocation>
        <location evidence="1">Membrane</location>
        <topology evidence="1">Peripheral membrane protein</topology>
    </subcellularLocation>
    <subcellularLocation>
        <location evidence="3">Endosome membrane</location>
        <topology evidence="3">Peripheral membrane protein</topology>
    </subcellularLocation>
</comment>
<comment type="alternative products">
    <event type="alternative splicing"/>
    <isoform>
        <id>Q9QZ88-1</id>
        <name>1</name>
        <sequence type="displayed"/>
    </isoform>
    <isoform>
        <id>Q9QZ88-2</id>
        <name>2</name>
        <sequence type="described" ref="VSP_004074"/>
    </isoform>
</comment>
<comment type="similarity">
    <text evidence="12">Belongs to the VPS29 family.</text>
</comment>
<comment type="caution">
    <text evidence="9 11">Was originally believed to be a metal-dependent phosphatase but shown to lack catalytic activity; can bind metals (Zn(2+) and Mn(2+)) with very low affinity suggesting that metal binding is not required for its function.</text>
</comment>
<keyword id="KW-0002">3D-structure</keyword>
<keyword id="KW-0007">Acetylation</keyword>
<keyword id="KW-0025">Alternative splicing</keyword>
<keyword id="KW-0963">Cytoplasm</keyword>
<keyword id="KW-0903">Direct protein sequencing</keyword>
<keyword id="KW-0967">Endosome</keyword>
<keyword id="KW-0472">Membrane</keyword>
<keyword id="KW-0479">Metal-binding</keyword>
<keyword id="KW-0653">Protein transport</keyword>
<keyword id="KW-1185">Reference proteome</keyword>
<keyword id="KW-0813">Transport</keyword>
<keyword id="KW-0862">Zinc</keyword>
<gene>
    <name type="primary">Vps29</name>
</gene>
<accession>Q9QZ88</accession>
<accession>Q3UCZ0</accession>
<accession>Q9D107</accession>